<sequence length="303" mass="33979">MSFTTKVKEELIHLSTGDNNELAAIIKLSGSLGLAHQSLHLSITTENAKIARYIYSFIEDAYVIVPEIRYHQKTNLRKNRVYTVYVEQGVETILADLKLADSFFGLETGIEPQVLSDDNAGRSYLKGAFLTAGSIRDPESGKYQLEIYSVYLDHAQDLAQLMQKFMLDAKTIEHKSGAVTYLQKAEDIMDFLIIIGAMSCKEDFEAIKLLREARNDINRANNAETANIAKTISASMKTINNIIKIMDTIGLESLPIELQQVAQLRVKHPDYSIQQVADALEFPITKSGVNHRLRKINKIADDL</sequence>
<reference key="1">
    <citation type="journal article" date="2004" name="J. Infect. Dis.">
        <title>Progress toward characterization of the group A Streptococcus metagenome: complete genome sequence of a macrolide-resistant serotype M6 strain.</title>
        <authorList>
            <person name="Banks D.J."/>
            <person name="Porcella S.F."/>
            <person name="Barbian K.D."/>
            <person name="Beres S.B."/>
            <person name="Philips L.E."/>
            <person name="Voyich J.M."/>
            <person name="DeLeo F.R."/>
            <person name="Martin J.M."/>
            <person name="Somerville G.A."/>
            <person name="Musser J.M."/>
        </authorList>
    </citation>
    <scope>NUCLEOTIDE SEQUENCE [LARGE SCALE GENOMIC DNA]</scope>
    <source>
        <strain>ATCC BAA-946 / MGAS10394</strain>
    </source>
</reference>
<gene>
    <name evidence="1" type="primary">whiA</name>
    <name type="ordered locus">M6_Spy0561</name>
</gene>
<accession>Q5XD17</accession>
<proteinExistence type="inferred from homology"/>
<feature type="chain" id="PRO_0000376592" description="Probable cell division protein WhiA">
    <location>
        <begin position="1"/>
        <end position="303"/>
    </location>
</feature>
<feature type="DNA-binding region" description="H-T-H motif" evidence="1">
    <location>
        <begin position="272"/>
        <end position="303"/>
    </location>
</feature>
<comment type="function">
    <text evidence="1">Involved in cell division and chromosome segregation.</text>
</comment>
<comment type="similarity">
    <text evidence="1">Belongs to the WhiA family.</text>
</comment>
<keyword id="KW-0131">Cell cycle</keyword>
<keyword id="KW-0132">Cell division</keyword>
<keyword id="KW-0238">DNA-binding</keyword>
<evidence type="ECO:0000255" key="1">
    <source>
        <dbReference type="HAMAP-Rule" id="MF_01420"/>
    </source>
</evidence>
<dbReference type="EMBL" id="CP000003">
    <property type="protein sequence ID" value="AAT86696.1"/>
    <property type="molecule type" value="Genomic_DNA"/>
</dbReference>
<dbReference type="RefSeq" id="WP_011017562.1">
    <property type="nucleotide sequence ID" value="NC_006086.1"/>
</dbReference>
<dbReference type="SMR" id="Q5XD17"/>
<dbReference type="KEGG" id="spa:M6_Spy0561"/>
<dbReference type="HOGENOM" id="CLU_053282_0_0_9"/>
<dbReference type="Proteomes" id="UP000001167">
    <property type="component" value="Chromosome"/>
</dbReference>
<dbReference type="GO" id="GO:0003677">
    <property type="term" value="F:DNA binding"/>
    <property type="evidence" value="ECO:0007669"/>
    <property type="project" value="UniProtKB-UniRule"/>
</dbReference>
<dbReference type="GO" id="GO:0051301">
    <property type="term" value="P:cell division"/>
    <property type="evidence" value="ECO:0007669"/>
    <property type="project" value="UniProtKB-UniRule"/>
</dbReference>
<dbReference type="GO" id="GO:0043937">
    <property type="term" value="P:regulation of sporulation"/>
    <property type="evidence" value="ECO:0007669"/>
    <property type="project" value="InterPro"/>
</dbReference>
<dbReference type="Gene3D" id="3.10.28.10">
    <property type="entry name" value="Homing endonucleases"/>
    <property type="match status" value="1"/>
</dbReference>
<dbReference type="HAMAP" id="MF_01420">
    <property type="entry name" value="HTH_type_WhiA"/>
    <property type="match status" value="1"/>
</dbReference>
<dbReference type="InterPro" id="IPR027434">
    <property type="entry name" value="Homing_endonucl"/>
</dbReference>
<dbReference type="InterPro" id="IPR018478">
    <property type="entry name" value="Sporu_reg_WhiA_N_dom"/>
</dbReference>
<dbReference type="InterPro" id="IPR003802">
    <property type="entry name" value="Sporulation_regulator_WhiA"/>
</dbReference>
<dbReference type="InterPro" id="IPR023054">
    <property type="entry name" value="Sporulation_regulator_WhiA_C"/>
</dbReference>
<dbReference type="InterPro" id="IPR039518">
    <property type="entry name" value="WhiA_LAGLIDADG_dom"/>
</dbReference>
<dbReference type="NCBIfam" id="TIGR00647">
    <property type="entry name" value="DNA_bind_WhiA"/>
    <property type="match status" value="1"/>
</dbReference>
<dbReference type="PANTHER" id="PTHR37307">
    <property type="entry name" value="CELL DIVISION PROTEIN WHIA-RELATED"/>
    <property type="match status" value="1"/>
</dbReference>
<dbReference type="PANTHER" id="PTHR37307:SF1">
    <property type="entry name" value="CELL DIVISION PROTEIN WHIA-RELATED"/>
    <property type="match status" value="1"/>
</dbReference>
<dbReference type="Pfam" id="PF02650">
    <property type="entry name" value="HTH_WhiA"/>
    <property type="match status" value="1"/>
</dbReference>
<dbReference type="Pfam" id="PF14527">
    <property type="entry name" value="LAGLIDADG_WhiA"/>
    <property type="match status" value="1"/>
</dbReference>
<dbReference type="Pfam" id="PF10298">
    <property type="entry name" value="WhiA_N"/>
    <property type="match status" value="1"/>
</dbReference>
<dbReference type="SUPFAM" id="SSF55608">
    <property type="entry name" value="Homing endonucleases"/>
    <property type="match status" value="1"/>
</dbReference>
<name>WHIA_STRP6</name>
<organism>
    <name type="scientific">Streptococcus pyogenes serotype M6 (strain ATCC BAA-946 / MGAS10394)</name>
    <dbReference type="NCBI Taxonomy" id="286636"/>
    <lineage>
        <taxon>Bacteria</taxon>
        <taxon>Bacillati</taxon>
        <taxon>Bacillota</taxon>
        <taxon>Bacilli</taxon>
        <taxon>Lactobacillales</taxon>
        <taxon>Streptococcaceae</taxon>
        <taxon>Streptococcus</taxon>
    </lineage>
</organism>
<protein>
    <recommendedName>
        <fullName evidence="1">Probable cell division protein WhiA</fullName>
    </recommendedName>
</protein>